<evidence type="ECO:0000250" key="1"/>
<evidence type="ECO:0000305" key="2"/>
<reference key="1">
    <citation type="journal article" date="2001" name="Lancet">
        <title>Whole genome sequencing of meticillin-resistant Staphylococcus aureus.</title>
        <authorList>
            <person name="Kuroda M."/>
            <person name="Ohta T."/>
            <person name="Uchiyama I."/>
            <person name="Baba T."/>
            <person name="Yuzawa H."/>
            <person name="Kobayashi I."/>
            <person name="Cui L."/>
            <person name="Oguchi A."/>
            <person name="Aoki K."/>
            <person name="Nagai Y."/>
            <person name="Lian J.-Q."/>
            <person name="Ito T."/>
            <person name="Kanamori M."/>
            <person name="Matsumaru H."/>
            <person name="Maruyama A."/>
            <person name="Murakami H."/>
            <person name="Hosoyama A."/>
            <person name="Mizutani-Ui Y."/>
            <person name="Takahashi N.K."/>
            <person name="Sawano T."/>
            <person name="Inoue R."/>
            <person name="Kaito C."/>
            <person name="Sekimizu K."/>
            <person name="Hirakawa H."/>
            <person name="Kuhara S."/>
            <person name="Goto S."/>
            <person name="Yabuzaki J."/>
            <person name="Kanehisa M."/>
            <person name="Yamashita A."/>
            <person name="Oshima K."/>
            <person name="Furuya K."/>
            <person name="Yoshino C."/>
            <person name="Shiba T."/>
            <person name="Hattori M."/>
            <person name="Ogasawara N."/>
            <person name="Hayashi H."/>
            <person name="Hiramatsu K."/>
        </authorList>
    </citation>
    <scope>NUCLEOTIDE SEQUENCE [LARGE SCALE GENOMIC DNA]</scope>
    <source>
        <strain>Mu50 / ATCC 700699</strain>
    </source>
</reference>
<proteinExistence type="inferred from homology"/>
<feature type="chain" id="PRO_0000274132" description="Transcriptional regulator CtsR">
    <location>
        <begin position="1"/>
        <end position="153"/>
    </location>
</feature>
<keyword id="KW-0238">DNA-binding</keyword>
<keyword id="KW-0678">Repressor</keyword>
<keyword id="KW-0346">Stress response</keyword>
<keyword id="KW-0804">Transcription</keyword>
<keyword id="KW-0805">Transcription regulation</keyword>
<organism>
    <name type="scientific">Staphylococcus aureus (strain Mu50 / ATCC 700699)</name>
    <dbReference type="NCBI Taxonomy" id="158878"/>
    <lineage>
        <taxon>Bacteria</taxon>
        <taxon>Bacillati</taxon>
        <taxon>Bacillota</taxon>
        <taxon>Bacilli</taxon>
        <taxon>Bacillales</taxon>
        <taxon>Staphylococcaceae</taxon>
        <taxon>Staphylococcus</taxon>
    </lineage>
</organism>
<gene>
    <name type="primary">ctsR</name>
    <name type="ordered locus">SAV0522</name>
</gene>
<comment type="function">
    <text evidence="1">Negative regulator of clpC, clpB and clpP transcription by binding directly and specifically to their promoter region.</text>
</comment>
<comment type="similarity">
    <text evidence="2">Belongs to the CtsR family.</text>
</comment>
<sequence length="153" mass="17842">MHNMSDIIEQYIKRLFEESNEDVVEIQRANIAQRFDCVPSQLNYVIKTRFTNEHGYEIESKRGGGGYIRITKIENKDATGYINHLLQLIGPSISQQQAYYIIDGLLDKMLINEREAKMIQAVIDRETLSMDMVSRDIIRANILKRLLPVINYY</sequence>
<accession>Q99W81</accession>
<protein>
    <recommendedName>
        <fullName>Transcriptional regulator CtsR</fullName>
    </recommendedName>
</protein>
<name>CTSR_STAAM</name>
<dbReference type="EMBL" id="BA000017">
    <property type="protein sequence ID" value="BAB56684.1"/>
    <property type="molecule type" value="Genomic_DNA"/>
</dbReference>
<dbReference type="RefSeq" id="WP_000551762.1">
    <property type="nucleotide sequence ID" value="NC_002758.2"/>
</dbReference>
<dbReference type="SMR" id="Q99W81"/>
<dbReference type="KEGG" id="sav:SAV0522"/>
<dbReference type="HOGENOM" id="CLU_118139_0_0_9"/>
<dbReference type="PhylomeDB" id="Q99W81"/>
<dbReference type="Proteomes" id="UP000002481">
    <property type="component" value="Chromosome"/>
</dbReference>
<dbReference type="GO" id="GO:0003677">
    <property type="term" value="F:DNA binding"/>
    <property type="evidence" value="ECO:0007669"/>
    <property type="project" value="UniProtKB-KW"/>
</dbReference>
<dbReference type="GO" id="GO:0006355">
    <property type="term" value="P:regulation of DNA-templated transcription"/>
    <property type="evidence" value="ECO:0007669"/>
    <property type="project" value="InterPro"/>
</dbReference>
<dbReference type="FunFam" id="1.10.1200.150:FF:000002">
    <property type="entry name" value="Transcriptional regulator CtsR"/>
    <property type="match status" value="1"/>
</dbReference>
<dbReference type="FunFam" id="3.30.56.130:FF:000001">
    <property type="entry name" value="Transcriptional regulator CtsR"/>
    <property type="match status" value="1"/>
</dbReference>
<dbReference type="Gene3D" id="1.10.1200.150">
    <property type="entry name" value="Transcriptional regulator CtsR, C-terminal domain"/>
    <property type="match status" value="1"/>
</dbReference>
<dbReference type="Gene3D" id="3.30.56.130">
    <property type="entry name" value="Transcriptional regulator CtsR, winged HTH domain"/>
    <property type="match status" value="1"/>
</dbReference>
<dbReference type="InterPro" id="IPR008463">
    <property type="entry name" value="CtsR"/>
</dbReference>
<dbReference type="InterPro" id="IPR041473">
    <property type="entry name" value="CtsR_C"/>
</dbReference>
<dbReference type="InterPro" id="IPR041908">
    <property type="entry name" value="CtsR_C_sf"/>
</dbReference>
<dbReference type="InterPro" id="IPR040465">
    <property type="entry name" value="CtsR_N"/>
</dbReference>
<dbReference type="InterPro" id="IPR041902">
    <property type="entry name" value="CtsR_N_sf"/>
</dbReference>
<dbReference type="Pfam" id="PF05848">
    <property type="entry name" value="CtsR"/>
    <property type="match status" value="1"/>
</dbReference>
<dbReference type="Pfam" id="PF17727">
    <property type="entry name" value="CtsR_C"/>
    <property type="match status" value="1"/>
</dbReference>
<dbReference type="PIRSF" id="PIRSF010607">
    <property type="entry name" value="Txn_repr_CtsR"/>
    <property type="match status" value="1"/>
</dbReference>